<organism>
    <name type="scientific">Arabidopsis thaliana</name>
    <name type="common">Mouse-ear cress</name>
    <dbReference type="NCBI Taxonomy" id="3702"/>
    <lineage>
        <taxon>Eukaryota</taxon>
        <taxon>Viridiplantae</taxon>
        <taxon>Streptophyta</taxon>
        <taxon>Embryophyta</taxon>
        <taxon>Tracheophyta</taxon>
        <taxon>Spermatophyta</taxon>
        <taxon>Magnoliopsida</taxon>
        <taxon>eudicotyledons</taxon>
        <taxon>Gunneridae</taxon>
        <taxon>Pentapetalae</taxon>
        <taxon>rosids</taxon>
        <taxon>malvids</taxon>
        <taxon>Brassicales</taxon>
        <taxon>Brassicaceae</taxon>
        <taxon>Camelineae</taxon>
        <taxon>Arabidopsis</taxon>
    </lineage>
</organism>
<accession>Q9FIF0</accession>
<accession>F4KHU6</accession>
<protein>
    <recommendedName>
        <fullName>Putative L-type lectin-domain containing receptor kinase II.2</fullName>
        <shortName>LecRK-II.2</shortName>
        <ecNumber>2.7.11.1</ecNumber>
    </recommendedName>
</protein>
<reference key="1">
    <citation type="journal article" date="1998" name="DNA Res.">
        <title>Structural analysis of Arabidopsis thaliana chromosome 5. VIII. Sequence features of the regions of 1,081,958 bp covered by seventeen physically assigned P1 and TAC clones.</title>
        <authorList>
            <person name="Asamizu E."/>
            <person name="Sato S."/>
            <person name="Kaneko T."/>
            <person name="Nakamura Y."/>
            <person name="Kotani H."/>
            <person name="Miyajima N."/>
            <person name="Tabata S."/>
        </authorList>
    </citation>
    <scope>NUCLEOTIDE SEQUENCE [LARGE SCALE GENOMIC DNA]</scope>
    <source>
        <strain>cv. Columbia</strain>
    </source>
</reference>
<reference key="2">
    <citation type="journal article" date="2017" name="Plant J.">
        <title>Araport11: a complete reannotation of the Arabidopsis thaliana reference genome.</title>
        <authorList>
            <person name="Cheng C.Y."/>
            <person name="Krishnakumar V."/>
            <person name="Chan A.P."/>
            <person name="Thibaud-Nissen F."/>
            <person name="Schobel S."/>
            <person name="Town C.D."/>
        </authorList>
    </citation>
    <scope>GENOME REANNOTATION</scope>
    <source>
        <strain>cv. Columbia</strain>
    </source>
</reference>
<reference key="3">
    <citation type="journal article" date="2002" name="Crit. Rev. Plant Sci.">
        <title>Lectin receptor kinases in plants.</title>
        <authorList>
            <person name="Barre A."/>
            <person name="Herve C."/>
            <person name="Lescure B."/>
            <person name="Rouge P."/>
        </authorList>
    </citation>
    <scope>GENE FAMILY</scope>
</reference>
<reference key="4">
    <citation type="journal article" date="2009" name="J. Exp. Bot.">
        <title>Arabidopsis L-type lectin receptor kinases: phylogeny, classification, and expression profiles.</title>
        <authorList>
            <person name="Bouwmeester K."/>
            <person name="Govers F."/>
        </authorList>
    </citation>
    <scope>GENE FAMILY</scope>
    <scope>NOMENCLATURE</scope>
</reference>
<gene>
    <name type="primary">LECRK22</name>
    <name type="ordered locus">At5g59270</name>
    <name type="ORF">MNC17.20</name>
</gene>
<dbReference type="EC" id="2.7.11.1"/>
<dbReference type="EMBL" id="AB016890">
    <property type="protein sequence ID" value="BAB09772.1"/>
    <property type="status" value="ALT_SEQ"/>
    <property type="molecule type" value="Genomic_DNA"/>
</dbReference>
<dbReference type="EMBL" id="CP002688">
    <property type="protein sequence ID" value="AED97164.1"/>
    <property type="status" value="ALT_SEQ"/>
    <property type="molecule type" value="Genomic_DNA"/>
</dbReference>
<dbReference type="RefSeq" id="NP_200735.1">
    <property type="nucleotide sequence ID" value="NM_125317.2"/>
</dbReference>
<dbReference type="SMR" id="Q9FIF0"/>
<dbReference type="GlyCosmos" id="Q9FIF0">
    <property type="glycosylation" value="10 sites, No reported glycans"/>
</dbReference>
<dbReference type="GlyGen" id="Q9FIF0">
    <property type="glycosylation" value="12 sites"/>
</dbReference>
<dbReference type="PaxDb" id="3702-AT5G59270.1"/>
<dbReference type="PeptideAtlas" id="Q9FIF0"/>
<dbReference type="ProteomicsDB" id="238394"/>
<dbReference type="GeneID" id="836045"/>
<dbReference type="KEGG" id="ath:AT5G59270"/>
<dbReference type="Araport" id="AT5G59270"/>
<dbReference type="TAIR" id="AT5G59270">
    <property type="gene designation" value="LECRK-II.2"/>
</dbReference>
<dbReference type="eggNOG" id="ENOG502QSJ4">
    <property type="taxonomic scope" value="Eukaryota"/>
</dbReference>
<dbReference type="InParanoid" id="Q9FIF0"/>
<dbReference type="PRO" id="PR:Q9FIF0"/>
<dbReference type="Proteomes" id="UP000006548">
    <property type="component" value="Chromosome 5"/>
</dbReference>
<dbReference type="ExpressionAtlas" id="Q9FIF0">
    <property type="expression patterns" value="baseline and differential"/>
</dbReference>
<dbReference type="GO" id="GO:0005886">
    <property type="term" value="C:plasma membrane"/>
    <property type="evidence" value="ECO:0000250"/>
    <property type="project" value="UniProtKB"/>
</dbReference>
<dbReference type="GO" id="GO:0005524">
    <property type="term" value="F:ATP binding"/>
    <property type="evidence" value="ECO:0007669"/>
    <property type="project" value="UniProtKB-KW"/>
</dbReference>
<dbReference type="GO" id="GO:0030246">
    <property type="term" value="F:carbohydrate binding"/>
    <property type="evidence" value="ECO:0007669"/>
    <property type="project" value="UniProtKB-KW"/>
</dbReference>
<dbReference type="GO" id="GO:0106310">
    <property type="term" value="F:protein serine kinase activity"/>
    <property type="evidence" value="ECO:0007669"/>
    <property type="project" value="RHEA"/>
</dbReference>
<dbReference type="GO" id="GO:0004675">
    <property type="term" value="F:transmembrane receptor protein serine/threonine kinase activity"/>
    <property type="evidence" value="ECO:0000318"/>
    <property type="project" value="GO_Central"/>
</dbReference>
<dbReference type="GO" id="GO:0042742">
    <property type="term" value="P:defense response to bacterium"/>
    <property type="evidence" value="ECO:0000318"/>
    <property type="project" value="GO_Central"/>
</dbReference>
<dbReference type="GO" id="GO:0002229">
    <property type="term" value="P:defense response to oomycetes"/>
    <property type="evidence" value="ECO:0000318"/>
    <property type="project" value="GO_Central"/>
</dbReference>
<dbReference type="CDD" id="cd06899">
    <property type="entry name" value="lectin_legume_LecRK_Arcelin_ConA"/>
    <property type="match status" value="1"/>
</dbReference>
<dbReference type="CDD" id="cd14066">
    <property type="entry name" value="STKc_IRAK"/>
    <property type="match status" value="1"/>
</dbReference>
<dbReference type="FunFam" id="1.10.510.10:FF:000108">
    <property type="entry name" value="L-type lectin-domain containing receptor kinase S.4"/>
    <property type="match status" value="1"/>
</dbReference>
<dbReference type="FunFam" id="2.60.120.200:FF:000096">
    <property type="entry name" value="L-type lectin-domain containing receptor kinase V.9"/>
    <property type="match status" value="1"/>
</dbReference>
<dbReference type="FunFam" id="3.30.200.20:FF:000178">
    <property type="entry name" value="serine/threonine-protein kinase PBS1-like"/>
    <property type="match status" value="1"/>
</dbReference>
<dbReference type="Gene3D" id="2.60.120.200">
    <property type="match status" value="1"/>
</dbReference>
<dbReference type="Gene3D" id="3.30.200.20">
    <property type="entry name" value="Phosphorylase Kinase, domain 1"/>
    <property type="match status" value="1"/>
</dbReference>
<dbReference type="Gene3D" id="1.10.510.10">
    <property type="entry name" value="Transferase(Phosphotransferase) domain 1"/>
    <property type="match status" value="1"/>
</dbReference>
<dbReference type="InterPro" id="IPR013320">
    <property type="entry name" value="ConA-like_dom_sf"/>
</dbReference>
<dbReference type="InterPro" id="IPR011009">
    <property type="entry name" value="Kinase-like_dom_sf"/>
</dbReference>
<dbReference type="InterPro" id="IPR050528">
    <property type="entry name" value="L-type_Lectin-RKs"/>
</dbReference>
<dbReference type="InterPro" id="IPR019825">
    <property type="entry name" value="Lectin_legB_Mn/Ca_BS"/>
</dbReference>
<dbReference type="InterPro" id="IPR001220">
    <property type="entry name" value="Legume_lectin_dom"/>
</dbReference>
<dbReference type="InterPro" id="IPR000719">
    <property type="entry name" value="Prot_kinase_dom"/>
</dbReference>
<dbReference type="InterPro" id="IPR017441">
    <property type="entry name" value="Protein_kinase_ATP_BS"/>
</dbReference>
<dbReference type="InterPro" id="IPR008271">
    <property type="entry name" value="Ser/Thr_kinase_AS"/>
</dbReference>
<dbReference type="PANTHER" id="PTHR27007">
    <property type="match status" value="1"/>
</dbReference>
<dbReference type="Pfam" id="PF00139">
    <property type="entry name" value="Lectin_legB"/>
    <property type="match status" value="1"/>
</dbReference>
<dbReference type="Pfam" id="PF00069">
    <property type="entry name" value="Pkinase"/>
    <property type="match status" value="1"/>
</dbReference>
<dbReference type="SMART" id="SM00220">
    <property type="entry name" value="S_TKc"/>
    <property type="match status" value="1"/>
</dbReference>
<dbReference type="SUPFAM" id="SSF49899">
    <property type="entry name" value="Concanavalin A-like lectins/glucanases"/>
    <property type="match status" value="1"/>
</dbReference>
<dbReference type="SUPFAM" id="SSF56112">
    <property type="entry name" value="Protein kinase-like (PK-like)"/>
    <property type="match status" value="1"/>
</dbReference>
<dbReference type="PROSITE" id="PS00307">
    <property type="entry name" value="LECTIN_LEGUME_BETA"/>
    <property type="match status" value="1"/>
</dbReference>
<dbReference type="PROSITE" id="PS00107">
    <property type="entry name" value="PROTEIN_KINASE_ATP"/>
    <property type="match status" value="1"/>
</dbReference>
<dbReference type="PROSITE" id="PS50011">
    <property type="entry name" value="PROTEIN_KINASE_DOM"/>
    <property type="match status" value="1"/>
</dbReference>
<dbReference type="PROSITE" id="PS00108">
    <property type="entry name" value="PROTEIN_KINASE_ST"/>
    <property type="match status" value="1"/>
</dbReference>
<proteinExistence type="inferred from homology"/>
<keyword id="KW-0067">ATP-binding</keyword>
<keyword id="KW-1003">Cell membrane</keyword>
<keyword id="KW-0325">Glycoprotein</keyword>
<keyword id="KW-0418">Kinase</keyword>
<keyword id="KW-0430">Lectin</keyword>
<keyword id="KW-0472">Membrane</keyword>
<keyword id="KW-0547">Nucleotide-binding</keyword>
<keyword id="KW-0675">Receptor</keyword>
<keyword id="KW-1185">Reference proteome</keyword>
<keyword id="KW-0723">Serine/threonine-protein kinase</keyword>
<keyword id="KW-0732">Signal</keyword>
<keyword id="KW-0808">Transferase</keyword>
<keyword id="KW-0812">Transmembrane</keyword>
<keyword id="KW-1133">Transmembrane helix</keyword>
<evidence type="ECO:0000250" key="1"/>
<evidence type="ECO:0000255" key="2"/>
<evidence type="ECO:0000255" key="3">
    <source>
        <dbReference type="PROSITE-ProRule" id="PRU00159"/>
    </source>
</evidence>
<evidence type="ECO:0000255" key="4">
    <source>
        <dbReference type="PROSITE-ProRule" id="PRU10027"/>
    </source>
</evidence>
<evidence type="ECO:0000256" key="5">
    <source>
        <dbReference type="SAM" id="MobiDB-lite"/>
    </source>
</evidence>
<evidence type="ECO:0000305" key="6"/>
<sequence length="694" mass="77085">MAGVLRSLRFWMIICVQVLSLVLAQDRDEFVYHDFSQADLHLDGMASIDDGRLHLTNNTTKSTGHAFWKIPMNFTTSPSSSLSFSTEFVFAIFPLLGDGQGMAFVVAPFMDIRYSGDAASYLGLFNRKNDNKTENHILAVELDTNSSPEAIEDSDNHVGIDINSIISEDSANASYFSGTEGKNISFRLASEKSILVWIDYNGTEKLLNVTVAPVPTPKPALPYLSSSIKPRKPLLSRFINISEIFNGTMFVGFSGSTGTVKSDQYILGWSFKKGGQAESLDLSKILDPPNRPPPPSSPPPPPPPPPTPPTSRSKDSKNIIIICVTVTSIAFLLMLGGFLYLYKKKKYAEVLEHWENEYSPQRYSFRNLYKAIRGFRENRLLGAGGFGKVYKGELPSGTQIAVKRVYHNAEQGMKQYAAEIASMGRLRHKNLVQLLGYCRRKGELLLVYDYMPNGSLDDYLFNKNKLKDLTWSQRVNIIKGVASALLYLHEEWEQVVLHRDIKASNILLDADLNGRLGDFGLARFHDRGENLQATRVVGTIGYMAPELTAMGVATTKTDIYAFGSFILEVVCGRRPVEPDRPPEQMHLLKWVATCGKRDTLMDVVDSKLGDFKAKEAKLLLKLGMLCSQSNPESRPSMRHIIQYLEGNATIPSISFDTAGFGIPNISNETITQMTATSSSANFSFEDVTILFGGR</sequence>
<name>LRK22_ARATH</name>
<comment type="catalytic activity">
    <reaction>
        <text>L-seryl-[protein] + ATP = O-phospho-L-seryl-[protein] + ADP + H(+)</text>
        <dbReference type="Rhea" id="RHEA:17989"/>
        <dbReference type="Rhea" id="RHEA-COMP:9863"/>
        <dbReference type="Rhea" id="RHEA-COMP:11604"/>
        <dbReference type="ChEBI" id="CHEBI:15378"/>
        <dbReference type="ChEBI" id="CHEBI:29999"/>
        <dbReference type="ChEBI" id="CHEBI:30616"/>
        <dbReference type="ChEBI" id="CHEBI:83421"/>
        <dbReference type="ChEBI" id="CHEBI:456216"/>
        <dbReference type="EC" id="2.7.11.1"/>
    </reaction>
</comment>
<comment type="catalytic activity">
    <reaction>
        <text>L-threonyl-[protein] + ATP = O-phospho-L-threonyl-[protein] + ADP + H(+)</text>
        <dbReference type="Rhea" id="RHEA:46608"/>
        <dbReference type="Rhea" id="RHEA-COMP:11060"/>
        <dbReference type="Rhea" id="RHEA-COMP:11605"/>
        <dbReference type="ChEBI" id="CHEBI:15378"/>
        <dbReference type="ChEBI" id="CHEBI:30013"/>
        <dbReference type="ChEBI" id="CHEBI:30616"/>
        <dbReference type="ChEBI" id="CHEBI:61977"/>
        <dbReference type="ChEBI" id="CHEBI:456216"/>
        <dbReference type="EC" id="2.7.11.1"/>
    </reaction>
</comment>
<comment type="subcellular location">
    <subcellularLocation>
        <location evidence="1">Cell membrane</location>
        <topology evidence="1">Single-pass type I membrane protein</topology>
    </subcellularLocation>
</comment>
<comment type="similarity">
    <text evidence="6">In the C-terminal section; belongs to the protein kinase superfamily. Ser/Thr protein kinase family.</text>
</comment>
<comment type="similarity">
    <text evidence="6">In the N-terminal section; belongs to the leguminous lectin family.</text>
</comment>
<comment type="sequence caution" evidence="6">
    <conflict type="erroneous gene model prediction">
        <sequence resource="EMBL-CDS" id="AED97164"/>
    </conflict>
</comment>
<comment type="sequence caution" evidence="6">
    <conflict type="erroneous gene model prediction">
        <sequence resource="EMBL-CDS" id="BAB09772"/>
    </conflict>
</comment>
<comment type="sequence caution" evidence="6">
    <conflict type="erroneous termination">
        <sequence resource="EMBL-CDS" id="BAB09772"/>
    </conflict>
    <text>Truncated C-terminus.</text>
</comment>
<feature type="signal peptide" evidence="2">
    <location>
        <begin position="1"/>
        <end position="24"/>
    </location>
</feature>
<feature type="chain" id="PRO_0000403082" description="Putative L-type lectin-domain containing receptor kinase II.2">
    <location>
        <begin position="25"/>
        <end position="694"/>
    </location>
</feature>
<feature type="topological domain" description="Extracellular" evidence="2">
    <location>
        <begin position="25"/>
        <end position="318"/>
    </location>
</feature>
<feature type="transmembrane region" description="Helical" evidence="2">
    <location>
        <begin position="319"/>
        <end position="339"/>
    </location>
</feature>
<feature type="topological domain" description="Cytoplasmic" evidence="2">
    <location>
        <begin position="340"/>
        <end position="694"/>
    </location>
</feature>
<feature type="domain" description="Protein kinase" evidence="3">
    <location>
        <begin position="375"/>
        <end position="650"/>
    </location>
</feature>
<feature type="region of interest" description="Legume-lectin like">
    <location>
        <begin position="27"/>
        <end position="272"/>
    </location>
</feature>
<feature type="region of interest" description="Disordered" evidence="5">
    <location>
        <begin position="283"/>
        <end position="314"/>
    </location>
</feature>
<feature type="compositionally biased region" description="Pro residues" evidence="5">
    <location>
        <begin position="289"/>
        <end position="309"/>
    </location>
</feature>
<feature type="active site" description="Proton acceptor" evidence="3 4">
    <location>
        <position position="500"/>
    </location>
</feature>
<feature type="binding site" evidence="3">
    <location>
        <begin position="381"/>
        <end position="389"/>
    </location>
    <ligand>
        <name>ATP</name>
        <dbReference type="ChEBI" id="CHEBI:30616"/>
    </ligand>
</feature>
<feature type="binding site" evidence="3">
    <location>
        <position position="403"/>
    </location>
    <ligand>
        <name>ATP</name>
        <dbReference type="ChEBI" id="CHEBI:30616"/>
    </ligand>
</feature>
<feature type="glycosylation site" description="N-linked (GlcNAc...) asparagine" evidence="2">
    <location>
        <position position="57"/>
    </location>
</feature>
<feature type="glycosylation site" description="N-linked (GlcNAc...) asparagine" evidence="2">
    <location>
        <position position="58"/>
    </location>
</feature>
<feature type="glycosylation site" description="N-linked (GlcNAc...) asparagine" evidence="2">
    <location>
        <position position="73"/>
    </location>
</feature>
<feature type="glycosylation site" description="N-linked (GlcNAc...) asparagine" evidence="2">
    <location>
        <position position="131"/>
    </location>
</feature>
<feature type="glycosylation site" description="N-linked (GlcNAc...) asparagine" evidence="2">
    <location>
        <position position="172"/>
    </location>
</feature>
<feature type="glycosylation site" description="N-linked (GlcNAc...) asparagine" evidence="2">
    <location>
        <position position="183"/>
    </location>
</feature>
<feature type="glycosylation site" description="N-linked (GlcNAc...) asparagine" evidence="2">
    <location>
        <position position="201"/>
    </location>
</feature>
<feature type="glycosylation site" description="N-linked (GlcNAc...) asparagine" evidence="2">
    <location>
        <position position="208"/>
    </location>
</feature>
<feature type="glycosylation site" description="N-linked (GlcNAc...) asparagine" evidence="2">
    <location>
        <position position="240"/>
    </location>
</feature>
<feature type="glycosylation site" description="N-linked (GlcNAc...) asparagine" evidence="2">
    <location>
        <position position="246"/>
    </location>
</feature>